<feature type="chain" id="PRO_1000025758" description="Chaperonin GroEL">
    <location>
        <begin position="1"/>
        <end position="550"/>
    </location>
</feature>
<feature type="binding site" evidence="1">
    <location>
        <begin position="30"/>
        <end position="33"/>
    </location>
    <ligand>
        <name>ATP</name>
        <dbReference type="ChEBI" id="CHEBI:30616"/>
    </ligand>
</feature>
<feature type="binding site" evidence="1">
    <location>
        <position position="51"/>
    </location>
    <ligand>
        <name>ATP</name>
        <dbReference type="ChEBI" id="CHEBI:30616"/>
    </ligand>
</feature>
<feature type="binding site" evidence="1">
    <location>
        <begin position="87"/>
        <end position="91"/>
    </location>
    <ligand>
        <name>ATP</name>
        <dbReference type="ChEBI" id="CHEBI:30616"/>
    </ligand>
</feature>
<feature type="binding site" evidence="1">
    <location>
        <position position="415"/>
    </location>
    <ligand>
        <name>ATP</name>
        <dbReference type="ChEBI" id="CHEBI:30616"/>
    </ligand>
</feature>
<feature type="binding site" evidence="1">
    <location>
        <begin position="479"/>
        <end position="481"/>
    </location>
    <ligand>
        <name>ATP</name>
        <dbReference type="ChEBI" id="CHEBI:30616"/>
    </ligand>
</feature>
<feature type="binding site" evidence="1">
    <location>
        <position position="495"/>
    </location>
    <ligand>
        <name>ATP</name>
        <dbReference type="ChEBI" id="CHEBI:30616"/>
    </ligand>
</feature>
<evidence type="ECO:0000255" key="1">
    <source>
        <dbReference type="HAMAP-Rule" id="MF_00600"/>
    </source>
</evidence>
<dbReference type="EC" id="5.6.1.7" evidence="1"/>
<dbReference type="EMBL" id="CP000548">
    <property type="protein sequence ID" value="ABO04481.1"/>
    <property type="molecule type" value="Genomic_DNA"/>
</dbReference>
<dbReference type="RefSeq" id="WP_004185913.1">
    <property type="nucleotide sequence ID" value="NZ_CP007802.1"/>
</dbReference>
<dbReference type="SMR" id="A3MMB4"/>
<dbReference type="GeneID" id="92979713"/>
<dbReference type="KEGG" id="bmaz:BM44_1339"/>
<dbReference type="KEGG" id="bmn:BMA10247_1863"/>
<dbReference type="PATRIC" id="fig|320389.8.peg.1499"/>
<dbReference type="GO" id="GO:0005737">
    <property type="term" value="C:cytoplasm"/>
    <property type="evidence" value="ECO:0007669"/>
    <property type="project" value="UniProtKB-SubCell"/>
</dbReference>
<dbReference type="GO" id="GO:0005524">
    <property type="term" value="F:ATP binding"/>
    <property type="evidence" value="ECO:0007669"/>
    <property type="project" value="UniProtKB-UniRule"/>
</dbReference>
<dbReference type="GO" id="GO:0140662">
    <property type="term" value="F:ATP-dependent protein folding chaperone"/>
    <property type="evidence" value="ECO:0007669"/>
    <property type="project" value="InterPro"/>
</dbReference>
<dbReference type="GO" id="GO:0016853">
    <property type="term" value="F:isomerase activity"/>
    <property type="evidence" value="ECO:0007669"/>
    <property type="project" value="UniProtKB-KW"/>
</dbReference>
<dbReference type="GO" id="GO:0051082">
    <property type="term" value="F:unfolded protein binding"/>
    <property type="evidence" value="ECO:0007669"/>
    <property type="project" value="UniProtKB-UniRule"/>
</dbReference>
<dbReference type="GO" id="GO:0042026">
    <property type="term" value="P:protein refolding"/>
    <property type="evidence" value="ECO:0007669"/>
    <property type="project" value="UniProtKB-UniRule"/>
</dbReference>
<dbReference type="CDD" id="cd03344">
    <property type="entry name" value="GroEL"/>
    <property type="match status" value="1"/>
</dbReference>
<dbReference type="FunFam" id="1.10.560.10:FF:000001">
    <property type="entry name" value="60 kDa chaperonin"/>
    <property type="match status" value="1"/>
</dbReference>
<dbReference type="FunFam" id="3.50.7.10:FF:000001">
    <property type="entry name" value="60 kDa chaperonin"/>
    <property type="match status" value="1"/>
</dbReference>
<dbReference type="Gene3D" id="3.50.7.10">
    <property type="entry name" value="GroEL"/>
    <property type="match status" value="1"/>
</dbReference>
<dbReference type="Gene3D" id="1.10.560.10">
    <property type="entry name" value="GroEL-like equatorial domain"/>
    <property type="match status" value="1"/>
</dbReference>
<dbReference type="Gene3D" id="3.30.260.10">
    <property type="entry name" value="TCP-1-like chaperonin intermediate domain"/>
    <property type="match status" value="1"/>
</dbReference>
<dbReference type="HAMAP" id="MF_00600">
    <property type="entry name" value="CH60"/>
    <property type="match status" value="1"/>
</dbReference>
<dbReference type="InterPro" id="IPR018370">
    <property type="entry name" value="Chaperonin_Cpn60_CS"/>
</dbReference>
<dbReference type="InterPro" id="IPR001844">
    <property type="entry name" value="Cpn60/GroEL"/>
</dbReference>
<dbReference type="InterPro" id="IPR002423">
    <property type="entry name" value="Cpn60/GroEL/TCP-1"/>
</dbReference>
<dbReference type="InterPro" id="IPR027409">
    <property type="entry name" value="GroEL-like_apical_dom_sf"/>
</dbReference>
<dbReference type="InterPro" id="IPR027413">
    <property type="entry name" value="GROEL-like_equatorial_sf"/>
</dbReference>
<dbReference type="InterPro" id="IPR027410">
    <property type="entry name" value="TCP-1-like_intermed_sf"/>
</dbReference>
<dbReference type="NCBIfam" id="TIGR02348">
    <property type="entry name" value="GroEL"/>
    <property type="match status" value="1"/>
</dbReference>
<dbReference type="NCBIfam" id="NF000592">
    <property type="entry name" value="PRK00013.1"/>
    <property type="match status" value="1"/>
</dbReference>
<dbReference type="NCBIfam" id="NF009487">
    <property type="entry name" value="PRK12849.1"/>
    <property type="match status" value="1"/>
</dbReference>
<dbReference type="NCBIfam" id="NF009488">
    <property type="entry name" value="PRK12850.1"/>
    <property type="match status" value="1"/>
</dbReference>
<dbReference type="NCBIfam" id="NF009489">
    <property type="entry name" value="PRK12851.1"/>
    <property type="match status" value="1"/>
</dbReference>
<dbReference type="PANTHER" id="PTHR45633">
    <property type="entry name" value="60 KDA HEAT SHOCK PROTEIN, MITOCHONDRIAL"/>
    <property type="match status" value="1"/>
</dbReference>
<dbReference type="Pfam" id="PF00118">
    <property type="entry name" value="Cpn60_TCP1"/>
    <property type="match status" value="1"/>
</dbReference>
<dbReference type="PRINTS" id="PR00298">
    <property type="entry name" value="CHAPERONIN60"/>
</dbReference>
<dbReference type="SUPFAM" id="SSF52029">
    <property type="entry name" value="GroEL apical domain-like"/>
    <property type="match status" value="1"/>
</dbReference>
<dbReference type="SUPFAM" id="SSF48592">
    <property type="entry name" value="GroEL equatorial domain-like"/>
    <property type="match status" value="1"/>
</dbReference>
<dbReference type="SUPFAM" id="SSF54849">
    <property type="entry name" value="GroEL-intermediate domain like"/>
    <property type="match status" value="1"/>
</dbReference>
<dbReference type="PROSITE" id="PS00296">
    <property type="entry name" value="CHAPERONINS_CPN60"/>
    <property type="match status" value="1"/>
</dbReference>
<name>CH60_BURM7</name>
<comment type="function">
    <text evidence="1">Together with its co-chaperonin GroES, plays an essential role in assisting protein folding. The GroEL-GroES system forms a nano-cage that allows encapsulation of the non-native substrate proteins and provides a physical environment optimized to promote and accelerate protein folding.</text>
</comment>
<comment type="catalytic activity">
    <reaction evidence="1">
        <text>ATP + H2O + a folded polypeptide = ADP + phosphate + an unfolded polypeptide.</text>
        <dbReference type="EC" id="5.6.1.7"/>
    </reaction>
</comment>
<comment type="subunit">
    <text evidence="1">Forms a cylinder of 14 subunits composed of two heptameric rings stacked back-to-back. Interacts with the co-chaperonin GroES.</text>
</comment>
<comment type="subcellular location">
    <subcellularLocation>
        <location evidence="1">Cytoplasm</location>
    </subcellularLocation>
</comment>
<comment type="similarity">
    <text evidence="1">Belongs to the chaperonin (HSP60) family.</text>
</comment>
<proteinExistence type="inferred from homology"/>
<keyword id="KW-0067">ATP-binding</keyword>
<keyword id="KW-0143">Chaperone</keyword>
<keyword id="KW-0963">Cytoplasm</keyword>
<keyword id="KW-0413">Isomerase</keyword>
<keyword id="KW-0547">Nucleotide-binding</keyword>
<sequence length="550" mass="57522">MAAKDVVFGDSARAKMVEGVNILANAVKVTLGPKGRNVVLERSFGGPTVTKDGVSVAKEIELKDKLQNMGAQMVKEVASKTSDNAGDGTTTATVLAQSIVREGMKYVASGMNPMDLKRGIDKAVAAAVEELKKISKPCTTNKEIAQVGAISANSDSSIGDRIAEAMDKVGKEGVITVEDGKSLADELDVVEGMQFDRGYLSPYFINNPDKQVAVLENPFVLLHDKKVSNIRDLLPVLEQVAKAGRPLLIIAEDVEGEALATLVVNNIRGILKTVAVKAPGFGDRRKAMLEDIAILTGGQVIAEETGLTLEKATLAELGQAKRIEVGKENTTIIDGAGEAVNIEARVKQIRTQIEEATSDYDREKLQERVAKLAGGVAVIKVGAATEVEMKEKKARVEDALHATRAAVEEGIVPGGGVALIRARTAIASLTGVNADQNAGIKIVLRAMEEPLRQIVTNGGEEASVVVAAVAAGKGNYGYNAATGEYVDMVEAGVVDPTKVTRTALQNAASVAGLLLTTDAAVAELPKEDAPMPGGMPGGMGGMGMGMGMDM</sequence>
<accession>A3MMB4</accession>
<gene>
    <name evidence="1" type="primary">groEL</name>
    <name evidence="1" type="synonym">groL</name>
    <name type="ordered locus">BMA10247_1863</name>
</gene>
<reference key="1">
    <citation type="journal article" date="2010" name="Genome Biol. Evol.">
        <title>Continuing evolution of Burkholderia mallei through genome reduction and large-scale rearrangements.</title>
        <authorList>
            <person name="Losada L."/>
            <person name="Ronning C.M."/>
            <person name="DeShazer D."/>
            <person name="Woods D."/>
            <person name="Fedorova N."/>
            <person name="Kim H.S."/>
            <person name="Shabalina S.A."/>
            <person name="Pearson T.R."/>
            <person name="Brinkac L."/>
            <person name="Tan P."/>
            <person name="Nandi T."/>
            <person name="Crabtree J."/>
            <person name="Badger J."/>
            <person name="Beckstrom-Sternberg S."/>
            <person name="Saqib M."/>
            <person name="Schutzer S.E."/>
            <person name="Keim P."/>
            <person name="Nierman W.C."/>
        </authorList>
    </citation>
    <scope>NUCLEOTIDE SEQUENCE [LARGE SCALE GENOMIC DNA]</scope>
    <source>
        <strain>NCTC 10247</strain>
    </source>
</reference>
<protein>
    <recommendedName>
        <fullName evidence="1">Chaperonin GroEL</fullName>
        <ecNumber evidence="1">5.6.1.7</ecNumber>
    </recommendedName>
    <alternativeName>
        <fullName evidence="1">60 kDa chaperonin</fullName>
    </alternativeName>
    <alternativeName>
        <fullName evidence="1">Chaperonin-60</fullName>
        <shortName evidence="1">Cpn60</shortName>
    </alternativeName>
</protein>
<organism>
    <name type="scientific">Burkholderia mallei (strain NCTC 10247)</name>
    <dbReference type="NCBI Taxonomy" id="320389"/>
    <lineage>
        <taxon>Bacteria</taxon>
        <taxon>Pseudomonadati</taxon>
        <taxon>Pseudomonadota</taxon>
        <taxon>Betaproteobacteria</taxon>
        <taxon>Burkholderiales</taxon>
        <taxon>Burkholderiaceae</taxon>
        <taxon>Burkholderia</taxon>
        <taxon>pseudomallei group</taxon>
    </lineage>
</organism>